<dbReference type="EMBL" id="AE016826">
    <property type="protein sequence ID" value="AAO27035.1"/>
    <property type="molecule type" value="Genomic_DNA"/>
</dbReference>
<dbReference type="RefSeq" id="WP_011091436.1">
    <property type="nucleotide sequence ID" value="NC_004545.1"/>
</dbReference>
<dbReference type="SMR" id="Q89AH7"/>
<dbReference type="STRING" id="224915.bbp_313"/>
<dbReference type="KEGG" id="bab:bbp_313"/>
<dbReference type="eggNOG" id="COG4786">
    <property type="taxonomic scope" value="Bacteria"/>
</dbReference>
<dbReference type="HOGENOM" id="CLU_013687_0_1_6"/>
<dbReference type="OrthoDB" id="9804559at2"/>
<dbReference type="Proteomes" id="UP000000601">
    <property type="component" value="Chromosome"/>
</dbReference>
<dbReference type="GO" id="GO:0009426">
    <property type="term" value="C:bacterial-type flagellum basal body, distal rod"/>
    <property type="evidence" value="ECO:0007669"/>
    <property type="project" value="InterPro"/>
</dbReference>
<dbReference type="GO" id="GO:0071978">
    <property type="term" value="P:bacterial-type flagellum-dependent swarming motility"/>
    <property type="evidence" value="ECO:0007669"/>
    <property type="project" value="TreeGrafter"/>
</dbReference>
<dbReference type="InterPro" id="IPR001444">
    <property type="entry name" value="Flag_bb_rod_N"/>
</dbReference>
<dbReference type="InterPro" id="IPR019776">
    <property type="entry name" value="Flagellar_basal_body_rod_CS"/>
</dbReference>
<dbReference type="InterPro" id="IPR020013">
    <property type="entry name" value="Flagellar_FlgE/F/G"/>
</dbReference>
<dbReference type="InterPro" id="IPR010930">
    <property type="entry name" value="Flg_bb/hook_C_dom"/>
</dbReference>
<dbReference type="InterPro" id="IPR037925">
    <property type="entry name" value="FlgE/F/G-like"/>
</dbReference>
<dbReference type="InterPro" id="IPR012834">
    <property type="entry name" value="FlgG_G_neg"/>
</dbReference>
<dbReference type="InterPro" id="IPR053967">
    <property type="entry name" value="LlgE_F_G-like_D1"/>
</dbReference>
<dbReference type="NCBIfam" id="TIGR03506">
    <property type="entry name" value="FlgEFG_subfam"/>
    <property type="match status" value="2"/>
</dbReference>
<dbReference type="NCBIfam" id="TIGR02488">
    <property type="entry name" value="flgG_G_neg"/>
    <property type="match status" value="1"/>
</dbReference>
<dbReference type="PANTHER" id="PTHR30435:SF19">
    <property type="entry name" value="FLAGELLAR BASAL-BODY ROD PROTEIN FLGG"/>
    <property type="match status" value="1"/>
</dbReference>
<dbReference type="PANTHER" id="PTHR30435">
    <property type="entry name" value="FLAGELLAR PROTEIN"/>
    <property type="match status" value="1"/>
</dbReference>
<dbReference type="Pfam" id="PF00460">
    <property type="entry name" value="Flg_bb_rod"/>
    <property type="match status" value="1"/>
</dbReference>
<dbReference type="Pfam" id="PF06429">
    <property type="entry name" value="Flg_bbr_C"/>
    <property type="match status" value="1"/>
</dbReference>
<dbReference type="Pfam" id="PF22692">
    <property type="entry name" value="LlgE_F_G_D1"/>
    <property type="match status" value="1"/>
</dbReference>
<dbReference type="SUPFAM" id="SSF117143">
    <property type="entry name" value="Flagellar hook protein flgE"/>
    <property type="match status" value="1"/>
</dbReference>
<dbReference type="PROSITE" id="PS00588">
    <property type="entry name" value="FLAGELLA_BB_ROD"/>
    <property type="match status" value="1"/>
</dbReference>
<evidence type="ECO:0000250" key="1"/>
<evidence type="ECO:0000256" key="2">
    <source>
        <dbReference type="SAM" id="MobiDB-lite"/>
    </source>
</evidence>
<evidence type="ECO:0000305" key="3"/>
<accession>Q89AH7</accession>
<feature type="chain" id="PRO_0000180847" description="Flagellar basal-body rod protein FlgG">
    <location>
        <begin position="1"/>
        <end position="260"/>
    </location>
</feature>
<feature type="region of interest" description="Disordered" evidence="2">
    <location>
        <begin position="52"/>
        <end position="71"/>
    </location>
</feature>
<feature type="compositionally biased region" description="Polar residues" evidence="2">
    <location>
        <begin position="52"/>
        <end position="67"/>
    </location>
</feature>
<sequence>MIPALWIAKTGLDAQQINMNVIANNLANVNTNGFKRSKAIFEDLIYHTVQQPGSKSSEETISPSGFQLGTGVRPITTEREHSQGNLSKTNSLKDVAINGNGFFQVQLPDGNAAYTRDGSFQINPNGQLVTNNGFLIQPVINFPANGNNMSVSRDGIITVRIPEQTQPIRVGKLYLANFVNDSGLSNIGENLYQETEASGNPSISSPGSHGTGLLYQSYVETSNVNIAEELVNMIQAQRAYEINSKVITTADQMLQKLSLL</sequence>
<reference key="1">
    <citation type="journal article" date="2003" name="Proc. Natl. Acad. Sci. U.S.A.">
        <title>Reductive genome evolution in Buchnera aphidicola.</title>
        <authorList>
            <person name="van Ham R.C.H.J."/>
            <person name="Kamerbeek J."/>
            <person name="Palacios C."/>
            <person name="Rausell C."/>
            <person name="Abascal F."/>
            <person name="Bastolla U."/>
            <person name="Fernandez J.M."/>
            <person name="Jimenez L."/>
            <person name="Postigo M."/>
            <person name="Silva F.J."/>
            <person name="Tamames J."/>
            <person name="Viguera E."/>
            <person name="Latorre A."/>
            <person name="Valencia A."/>
            <person name="Moran F."/>
            <person name="Moya A."/>
        </authorList>
    </citation>
    <scope>NUCLEOTIDE SEQUENCE [LARGE SCALE GENOMIC DNA]</scope>
    <source>
        <strain>Bp</strain>
    </source>
</reference>
<name>FLGG_BUCBP</name>
<organism>
    <name type="scientific">Buchnera aphidicola subsp. Baizongia pistaciae (strain Bp)</name>
    <dbReference type="NCBI Taxonomy" id="224915"/>
    <lineage>
        <taxon>Bacteria</taxon>
        <taxon>Pseudomonadati</taxon>
        <taxon>Pseudomonadota</taxon>
        <taxon>Gammaproteobacteria</taxon>
        <taxon>Enterobacterales</taxon>
        <taxon>Erwiniaceae</taxon>
        <taxon>Buchnera</taxon>
    </lineage>
</organism>
<keyword id="KW-0975">Bacterial flagellum</keyword>
<keyword id="KW-1185">Reference proteome</keyword>
<protein>
    <recommendedName>
        <fullName>Flagellar basal-body rod protein FlgG</fullName>
    </recommendedName>
    <alternativeName>
        <fullName>Distal rod protein</fullName>
    </alternativeName>
</protein>
<gene>
    <name type="primary">flgG</name>
    <name type="ordered locus">bbp_313</name>
</gene>
<proteinExistence type="inferred from homology"/>
<comment type="subunit">
    <text evidence="1">The basal body constitutes a major portion of the flagellar organelle and consists of four rings (L,P,S, and M) mounted on a central rod. The rod consists of about 26 subunits of FlgG in the distal portion, and FlgB, FlgC and FlgF are thought to build up the proximal portion of the rod with about 6 subunits each (By similarity).</text>
</comment>
<comment type="subcellular location">
    <subcellularLocation>
        <location evidence="1">Bacterial flagellum basal body</location>
    </subcellularLocation>
</comment>
<comment type="similarity">
    <text evidence="3">Belongs to the flagella basal body rod proteins family.</text>
</comment>